<accession>O32232</accession>
<reference key="1">
    <citation type="journal article" date="1997" name="Nature">
        <title>The complete genome sequence of the Gram-positive bacterium Bacillus subtilis.</title>
        <authorList>
            <person name="Kunst F."/>
            <person name="Ogasawara N."/>
            <person name="Moszer I."/>
            <person name="Albertini A.M."/>
            <person name="Alloni G."/>
            <person name="Azevedo V."/>
            <person name="Bertero M.G."/>
            <person name="Bessieres P."/>
            <person name="Bolotin A."/>
            <person name="Borchert S."/>
            <person name="Borriss R."/>
            <person name="Boursier L."/>
            <person name="Brans A."/>
            <person name="Braun M."/>
            <person name="Brignell S.C."/>
            <person name="Bron S."/>
            <person name="Brouillet S."/>
            <person name="Bruschi C.V."/>
            <person name="Caldwell B."/>
            <person name="Capuano V."/>
            <person name="Carter N.M."/>
            <person name="Choi S.-K."/>
            <person name="Codani J.-J."/>
            <person name="Connerton I.F."/>
            <person name="Cummings N.J."/>
            <person name="Daniel R.A."/>
            <person name="Denizot F."/>
            <person name="Devine K.M."/>
            <person name="Duesterhoeft A."/>
            <person name="Ehrlich S.D."/>
            <person name="Emmerson P.T."/>
            <person name="Entian K.-D."/>
            <person name="Errington J."/>
            <person name="Fabret C."/>
            <person name="Ferrari E."/>
            <person name="Foulger D."/>
            <person name="Fritz C."/>
            <person name="Fujita M."/>
            <person name="Fujita Y."/>
            <person name="Fuma S."/>
            <person name="Galizzi A."/>
            <person name="Galleron N."/>
            <person name="Ghim S.-Y."/>
            <person name="Glaser P."/>
            <person name="Goffeau A."/>
            <person name="Golightly E.J."/>
            <person name="Grandi G."/>
            <person name="Guiseppi G."/>
            <person name="Guy B.J."/>
            <person name="Haga K."/>
            <person name="Haiech J."/>
            <person name="Harwood C.R."/>
            <person name="Henaut A."/>
            <person name="Hilbert H."/>
            <person name="Holsappel S."/>
            <person name="Hosono S."/>
            <person name="Hullo M.-F."/>
            <person name="Itaya M."/>
            <person name="Jones L.-M."/>
            <person name="Joris B."/>
            <person name="Karamata D."/>
            <person name="Kasahara Y."/>
            <person name="Klaerr-Blanchard M."/>
            <person name="Klein C."/>
            <person name="Kobayashi Y."/>
            <person name="Koetter P."/>
            <person name="Koningstein G."/>
            <person name="Krogh S."/>
            <person name="Kumano M."/>
            <person name="Kurita K."/>
            <person name="Lapidus A."/>
            <person name="Lardinois S."/>
            <person name="Lauber J."/>
            <person name="Lazarevic V."/>
            <person name="Lee S.-M."/>
            <person name="Levine A."/>
            <person name="Liu H."/>
            <person name="Masuda S."/>
            <person name="Mauel C."/>
            <person name="Medigue C."/>
            <person name="Medina N."/>
            <person name="Mellado R.P."/>
            <person name="Mizuno M."/>
            <person name="Moestl D."/>
            <person name="Nakai S."/>
            <person name="Noback M."/>
            <person name="Noone D."/>
            <person name="O'Reilly M."/>
            <person name="Ogawa K."/>
            <person name="Ogiwara A."/>
            <person name="Oudega B."/>
            <person name="Park S.-H."/>
            <person name="Parro V."/>
            <person name="Pohl T.M."/>
            <person name="Portetelle D."/>
            <person name="Porwollik S."/>
            <person name="Prescott A.M."/>
            <person name="Presecan E."/>
            <person name="Pujic P."/>
            <person name="Purnelle B."/>
            <person name="Rapoport G."/>
            <person name="Rey M."/>
            <person name="Reynolds S."/>
            <person name="Rieger M."/>
            <person name="Rivolta C."/>
            <person name="Rocha E."/>
            <person name="Roche B."/>
            <person name="Rose M."/>
            <person name="Sadaie Y."/>
            <person name="Sato T."/>
            <person name="Scanlan E."/>
            <person name="Schleich S."/>
            <person name="Schroeter R."/>
            <person name="Scoffone F."/>
            <person name="Sekiguchi J."/>
            <person name="Sekowska A."/>
            <person name="Seror S.J."/>
            <person name="Serror P."/>
            <person name="Shin B.-S."/>
            <person name="Soldo B."/>
            <person name="Sorokin A."/>
            <person name="Tacconi E."/>
            <person name="Takagi T."/>
            <person name="Takahashi H."/>
            <person name="Takemaru K."/>
            <person name="Takeuchi M."/>
            <person name="Tamakoshi A."/>
            <person name="Tanaka T."/>
            <person name="Terpstra P."/>
            <person name="Tognoni A."/>
            <person name="Tosato V."/>
            <person name="Uchiyama S."/>
            <person name="Vandenbol M."/>
            <person name="Vannier F."/>
            <person name="Vassarotti A."/>
            <person name="Viari A."/>
            <person name="Wambutt R."/>
            <person name="Wedler E."/>
            <person name="Wedler H."/>
            <person name="Weitzenegger T."/>
            <person name="Winters P."/>
            <person name="Wipat A."/>
            <person name="Yamamoto H."/>
            <person name="Yamane K."/>
            <person name="Yasumoto K."/>
            <person name="Yata K."/>
            <person name="Yoshida K."/>
            <person name="Yoshikawa H.-F."/>
            <person name="Zumstein E."/>
            <person name="Yoshikawa H."/>
            <person name="Danchin A."/>
        </authorList>
    </citation>
    <scope>NUCLEOTIDE SEQUENCE [LARGE SCALE GENOMIC DNA]</scope>
    <source>
        <strain>168</strain>
    </source>
</reference>
<reference key="2">
    <citation type="journal article" date="2007" name="J. Bacteriol.">
        <title>The SsrA-SmpB ribosome rescue system is important for growth of Bacillus subtilis at low and high temperatures.</title>
        <authorList>
            <person name="Shin J.H."/>
            <person name="Price C.W."/>
        </authorList>
    </citation>
    <scope>INDUCTION</scope>
    <scope>DISRUPTION PHENOTYPE</scope>
    <source>
        <strain>168 / Marburg / ATCC 6051 / DSM 10 / JCM 1465 / NBRC 13719 / NCIMB 3610 / NRRL NRS-744 / VKM B-501</strain>
    </source>
</reference>
<name>EST_BACSU</name>
<sequence length="246" mass="28193">MKVVTPKPFTFKGGDKAVLLLHGFTGNTADVRMLGRYLNERGYTCHAPQYEGHGVPPEELVHTGPEDWWKNVMDGYEYLKSEGYESIAACGLSLGGVFSLKLGYTVPIKGIVPMCAPMHIKSEEVMYQGVLSYARNYKKFEGKSPEQIEEEMKEFEKTPMNTLKALQDLIADVRNNVDMIYSPTFVVQARHDHMINTESANIIYNEVETDDKQLKWYEESGHVITLDKERDLVHQDVYEFLEKLDW</sequence>
<gene>
    <name type="primary">est</name>
    <name type="synonym">yvaK</name>
    <name type="ordered locus">BSU33620</name>
</gene>
<feature type="chain" id="PRO_0000360656" description="Carboxylesterase">
    <location>
        <begin position="1"/>
        <end position="246"/>
    </location>
</feature>
<feature type="active site" description="Nucleophile" evidence="1">
    <location>
        <position position="93"/>
    </location>
</feature>
<feature type="active site" description="Charge relay system" evidence="1">
    <location>
        <position position="192"/>
    </location>
</feature>
<feature type="active site" description="Charge relay system" evidence="1">
    <location>
        <position position="222"/>
    </location>
</feature>
<keyword id="KW-0378">Hydrolase</keyword>
<keyword id="KW-1185">Reference proteome</keyword>
<keyword id="KW-0719">Serine esterase</keyword>
<comment type="function">
    <text evidence="1">Involved in the detoxification of xenobiotics. Shows maximal activity with C6 substrates, with gradually decreasing activity from C8 to C12 substrates. No activity for higher chain length substrates acids rather than long-chain ones (By similarity).</text>
</comment>
<comment type="catalytic activity">
    <reaction>
        <text>a carboxylic ester + H2O = an alcohol + a carboxylate + H(+)</text>
        <dbReference type="Rhea" id="RHEA:21164"/>
        <dbReference type="ChEBI" id="CHEBI:15377"/>
        <dbReference type="ChEBI" id="CHEBI:15378"/>
        <dbReference type="ChEBI" id="CHEBI:29067"/>
        <dbReference type="ChEBI" id="CHEBI:30879"/>
        <dbReference type="ChEBI" id="CHEBI:33308"/>
        <dbReference type="EC" id="3.1.1.1"/>
    </reaction>
</comment>
<comment type="subunit">
    <text evidence="1">Homodimer.</text>
</comment>
<comment type="induction">
    <text evidence="2">Constitutively expressed, part of a 5 gene operon with multiple promoters. Not ethanol-stress induced.</text>
</comment>
<comment type="disruption phenotype">
    <text evidence="2">No visible phenotype.</text>
</comment>
<comment type="similarity">
    <text evidence="3">Belongs to the lipase/esterase LIP3/BchO family.</text>
</comment>
<proteinExistence type="evidence at transcript level"/>
<dbReference type="EC" id="3.1.1.1"/>
<dbReference type="EMBL" id="AL009126">
    <property type="protein sequence ID" value="CAB15367.2"/>
    <property type="molecule type" value="Genomic_DNA"/>
</dbReference>
<dbReference type="PIR" id="H70027">
    <property type="entry name" value="H70027"/>
</dbReference>
<dbReference type="RefSeq" id="NP_391242.1">
    <property type="nucleotide sequence ID" value="NC_000964.3"/>
</dbReference>
<dbReference type="RefSeq" id="WP_003242610.1">
    <property type="nucleotide sequence ID" value="NZ_OZ025638.1"/>
</dbReference>
<dbReference type="SMR" id="O32232"/>
<dbReference type="FunCoup" id="O32232">
    <property type="interactions" value="12"/>
</dbReference>
<dbReference type="STRING" id="224308.BSU33620"/>
<dbReference type="ESTHER" id="bacsu-YVAK">
    <property type="family name" value="CarbLipBact_1"/>
</dbReference>
<dbReference type="MEROPS" id="S09.946"/>
<dbReference type="jPOST" id="O32232"/>
<dbReference type="PaxDb" id="224308-BSU33620"/>
<dbReference type="EnsemblBacteria" id="CAB15367">
    <property type="protein sequence ID" value="CAB15367"/>
    <property type="gene ID" value="BSU_33620"/>
</dbReference>
<dbReference type="GeneID" id="938643"/>
<dbReference type="KEGG" id="bsu:BSU33620"/>
<dbReference type="PATRIC" id="fig|224308.179.peg.3647"/>
<dbReference type="eggNOG" id="COG1647">
    <property type="taxonomic scope" value="Bacteria"/>
</dbReference>
<dbReference type="InParanoid" id="O32232"/>
<dbReference type="OrthoDB" id="9800213at2"/>
<dbReference type="BioCyc" id="BSUB:BSU33620-MONOMER"/>
<dbReference type="Proteomes" id="UP000001570">
    <property type="component" value="Chromosome"/>
</dbReference>
<dbReference type="GO" id="GO:0016020">
    <property type="term" value="C:membrane"/>
    <property type="evidence" value="ECO:0000318"/>
    <property type="project" value="GO_Central"/>
</dbReference>
<dbReference type="GO" id="GO:0106435">
    <property type="term" value="F:carboxylesterase activity"/>
    <property type="evidence" value="ECO:0007669"/>
    <property type="project" value="UniProtKB-EC"/>
</dbReference>
<dbReference type="GO" id="GO:0016298">
    <property type="term" value="F:lipase activity"/>
    <property type="evidence" value="ECO:0000318"/>
    <property type="project" value="GO_Central"/>
</dbReference>
<dbReference type="FunFam" id="3.40.50.1820:FF:000070">
    <property type="entry name" value="Carboxylesterase"/>
    <property type="match status" value="1"/>
</dbReference>
<dbReference type="Gene3D" id="3.40.50.1820">
    <property type="entry name" value="alpha/beta hydrolase"/>
    <property type="match status" value="1"/>
</dbReference>
<dbReference type="InterPro" id="IPR029058">
    <property type="entry name" value="AB_hydrolase_fold"/>
</dbReference>
<dbReference type="InterPro" id="IPR012354">
    <property type="entry name" value="Esterase_lipase"/>
</dbReference>
<dbReference type="InterPro" id="IPR022742">
    <property type="entry name" value="Hydrolase_4"/>
</dbReference>
<dbReference type="InterPro" id="IPR051044">
    <property type="entry name" value="MAG_DAG_Lipase"/>
</dbReference>
<dbReference type="PANTHER" id="PTHR11614">
    <property type="entry name" value="PHOSPHOLIPASE-RELATED"/>
    <property type="match status" value="1"/>
</dbReference>
<dbReference type="Pfam" id="PF12146">
    <property type="entry name" value="Hydrolase_4"/>
    <property type="match status" value="1"/>
</dbReference>
<dbReference type="PIRSF" id="PIRSF017388">
    <property type="entry name" value="Esterase_lipase"/>
    <property type="match status" value="1"/>
</dbReference>
<dbReference type="SUPFAM" id="SSF53474">
    <property type="entry name" value="alpha/beta-Hydrolases"/>
    <property type="match status" value="1"/>
</dbReference>
<protein>
    <recommendedName>
        <fullName>Carboxylesterase</fullName>
        <ecNumber>3.1.1.1</ecNumber>
    </recommendedName>
</protein>
<evidence type="ECO:0000250" key="1"/>
<evidence type="ECO:0000269" key="2">
    <source>
    </source>
</evidence>
<evidence type="ECO:0000305" key="3"/>
<organism>
    <name type="scientific">Bacillus subtilis (strain 168)</name>
    <dbReference type="NCBI Taxonomy" id="224308"/>
    <lineage>
        <taxon>Bacteria</taxon>
        <taxon>Bacillati</taxon>
        <taxon>Bacillota</taxon>
        <taxon>Bacilli</taxon>
        <taxon>Bacillales</taxon>
        <taxon>Bacillaceae</taxon>
        <taxon>Bacillus</taxon>
    </lineage>
</organism>